<comment type="function">
    <text evidence="1">This is a non-secretory ribonuclease. It is a pyrimidine specific nuclease with a slight preference for U. Cytotoxin and helminthotoxin. Possesses a wide variety of biological activities.</text>
</comment>
<comment type="catalytic activity">
    <reaction evidence="1">
        <text>an [RNA] containing cytidine + H2O = an [RNA]-3'-cytidine-3'-phosphate + a 5'-hydroxy-ribonucleotide-3'-[RNA].</text>
        <dbReference type="EC" id="4.6.1.18"/>
    </reaction>
</comment>
<comment type="catalytic activity">
    <reaction evidence="1">
        <text>an [RNA] containing uridine + H2O = an [RNA]-3'-uridine-3'-phosphate + a 5'-hydroxy-ribonucleotide-3'-[RNA].</text>
        <dbReference type="EC" id="4.6.1.18"/>
    </reaction>
</comment>
<comment type="similarity">
    <text evidence="3">Belongs to the pancreatic ribonuclease family.</text>
</comment>
<proteinExistence type="evidence at protein level"/>
<reference key="1">
    <citation type="journal article" date="1997" name="Nucleic Acids Res.">
        <title>Molecular cloning of four novel murine ribonuclease genes: unusual expansion within the ribonuclease A gene family.</title>
        <authorList>
            <person name="Batten D."/>
            <person name="Dyer K.D."/>
            <person name="Domachowske J.B."/>
            <person name="Rosenberg H.F."/>
        </authorList>
    </citation>
    <scope>NUCLEOTIDE SEQUENCE [GENOMIC DNA]</scope>
    <source>
        <tissue>Fibroblast</tissue>
    </source>
</reference>
<reference key="2">
    <citation type="submission" date="2002-05" db="EMBL/GenBank/DDBJ databases">
        <title>Transcriptional activation of the mouse eosinophil-associated ribonuclease 2 (Ear2) gene by an intronic enhancer element that binds NFATc1.</title>
        <authorList>
            <person name="Moreau J.M."/>
            <person name="McDevitt A.L."/>
            <person name="Rosenberg H.F."/>
            <person name="Dyer K.D."/>
        </authorList>
    </citation>
    <scope>NUCLEOTIDE SEQUENCE [GENOMIC DNA]</scope>
</reference>
<reference key="3">
    <citation type="journal article" date="2009" name="PLoS Biol.">
        <title>Lineage-specific biology revealed by a finished genome assembly of the mouse.</title>
        <authorList>
            <person name="Church D.M."/>
            <person name="Goodstadt L."/>
            <person name="Hillier L.W."/>
            <person name="Zody M.C."/>
            <person name="Goldstein S."/>
            <person name="She X."/>
            <person name="Bult C.J."/>
            <person name="Agarwala R."/>
            <person name="Cherry J.L."/>
            <person name="DiCuccio M."/>
            <person name="Hlavina W."/>
            <person name="Kapustin Y."/>
            <person name="Meric P."/>
            <person name="Maglott D."/>
            <person name="Birtle Z."/>
            <person name="Marques A.C."/>
            <person name="Graves T."/>
            <person name="Zhou S."/>
            <person name="Teague B."/>
            <person name="Potamousis K."/>
            <person name="Churas C."/>
            <person name="Place M."/>
            <person name="Herschleb J."/>
            <person name="Runnheim R."/>
            <person name="Forrest D."/>
            <person name="Amos-Landgraf J."/>
            <person name="Schwartz D.C."/>
            <person name="Cheng Z."/>
            <person name="Lindblad-Toh K."/>
            <person name="Eichler E.E."/>
            <person name="Ponting C.P."/>
        </authorList>
    </citation>
    <scope>NUCLEOTIDE SEQUENCE [LARGE SCALE GENOMIC DNA]</scope>
    <source>
        <strain>C57BL/6J</strain>
    </source>
</reference>
<reference key="4">
    <citation type="submission" date="2005-07" db="EMBL/GenBank/DDBJ databases">
        <authorList>
            <person name="Mural R.J."/>
            <person name="Adams M.D."/>
            <person name="Myers E.W."/>
            <person name="Smith H.O."/>
            <person name="Venter J.C."/>
        </authorList>
    </citation>
    <scope>NUCLEOTIDE SEQUENCE [LARGE SCALE GENOMIC DNA]</scope>
</reference>
<reference key="5">
    <citation type="journal article" date="2004" name="Genome Res.">
        <title>The status, quality, and expansion of the NIH full-length cDNA project: the Mammalian Gene Collection (MGC).</title>
        <authorList>
            <consortium name="The MGC Project Team"/>
        </authorList>
    </citation>
    <scope>NUCLEOTIDE SEQUENCE [LARGE SCALE MRNA]</scope>
</reference>
<reference key="6">
    <citation type="journal article" date="2008" name="J. Biol. Chem.">
        <title>Post-translational tyrosine nitration of eosinophil granule toxins mediated by eosinophil peroxidase.</title>
        <authorList>
            <person name="Ulrich M."/>
            <person name="Petre A."/>
            <person name="Youhnovski N."/>
            <person name="Proemm F."/>
            <person name="Schirle M."/>
            <person name="Schumm M."/>
            <person name="Pero R.S."/>
            <person name="Doyle A."/>
            <person name="Checkel J."/>
            <person name="Kita H."/>
            <person name="Thiyagarajan N."/>
            <person name="Acharya K.R."/>
            <person name="Schmid-Grendelmeier P."/>
            <person name="Simon H.-U."/>
            <person name="Schwarz H."/>
            <person name="Tsutsui M."/>
            <person name="Shimokawa H."/>
            <person name="Bellon G."/>
            <person name="Lee J.J."/>
            <person name="Przybylski M."/>
            <person name="Doering G."/>
        </authorList>
    </citation>
    <scope>NITRATION</scope>
</reference>
<accession>O35292</accession>
<accession>Q8K416</accession>
<sequence>MGLKLLESRLCLLLLLGLVLTLVSCQRPTPSQKFDIQHIYKKSSPKCDDAMRVVNKYTGKCKDLNTFLHTTFADVVRVCHNPPKTCKDGTSPNCHDSSSKVSVTICKLTKRARNYTHCRYKTTGAKKSYTVACNPRTPKDRPTYPVVPVHLDRLF</sequence>
<name>RNS2B_MOUSE</name>
<dbReference type="EC" id="4.6.1.18" evidence="1"/>
<dbReference type="EMBL" id="AF017260">
    <property type="protein sequence ID" value="AAC53491.1"/>
    <property type="molecule type" value="Genomic_DNA"/>
</dbReference>
<dbReference type="EMBL" id="AF512013">
    <property type="protein sequence ID" value="AAM44856.1"/>
    <property type="molecule type" value="Genomic_DNA"/>
</dbReference>
<dbReference type="EMBL" id="AC163664">
    <property type="status" value="NOT_ANNOTATED_CDS"/>
    <property type="molecule type" value="Genomic_DNA"/>
</dbReference>
<dbReference type="EMBL" id="CH466605">
    <property type="protein sequence ID" value="EDL20848.1"/>
    <property type="molecule type" value="Genomic_DNA"/>
</dbReference>
<dbReference type="EMBL" id="BC117776">
    <property type="protein sequence ID" value="AAI17777.1"/>
    <property type="molecule type" value="mRNA"/>
</dbReference>
<dbReference type="EMBL" id="BC119506">
    <property type="protein sequence ID" value="AAI19507.1"/>
    <property type="molecule type" value="mRNA"/>
</dbReference>
<dbReference type="CCDS" id="CCDS27039.1"/>
<dbReference type="RefSeq" id="NP_062271.2">
    <property type="nucleotide sequence ID" value="NM_019398.2"/>
</dbReference>
<dbReference type="SMR" id="O35292"/>
<dbReference type="FunCoup" id="O35292">
    <property type="interactions" value="432"/>
</dbReference>
<dbReference type="STRING" id="10090.ENSMUSP00000075074"/>
<dbReference type="GlyCosmos" id="O35292">
    <property type="glycosylation" value="1 site, No reported glycans"/>
</dbReference>
<dbReference type="GlyGen" id="O35292">
    <property type="glycosylation" value="1 site"/>
</dbReference>
<dbReference type="iPTMnet" id="O35292"/>
<dbReference type="PhosphoSitePlus" id="O35292"/>
<dbReference type="PaxDb" id="10090-ENSMUSP00000075074"/>
<dbReference type="ProteomicsDB" id="260827"/>
<dbReference type="DNASU" id="54159"/>
<dbReference type="Ensembl" id="ENSMUST00000075648.4">
    <property type="protein sequence ID" value="ENSMUSP00000075074.4"/>
    <property type="gene ID" value="ENSMUSG00000059606.4"/>
</dbReference>
<dbReference type="GeneID" id="54159"/>
<dbReference type="KEGG" id="mmu:54159"/>
<dbReference type="UCSC" id="uc007tmt.2">
    <property type="organism name" value="mouse"/>
</dbReference>
<dbReference type="AGR" id="MGI:1858598"/>
<dbReference type="CTD" id="54159"/>
<dbReference type="MGI" id="MGI:1858598">
    <property type="gene designation" value="Rnase2b"/>
</dbReference>
<dbReference type="VEuPathDB" id="HostDB:ENSMUSG00000059606"/>
<dbReference type="eggNOG" id="ENOG502TF52">
    <property type="taxonomic scope" value="Eukaryota"/>
</dbReference>
<dbReference type="GeneTree" id="ENSGT00940000162253"/>
<dbReference type="HOGENOM" id="CLU_117006_0_1_1"/>
<dbReference type="InParanoid" id="O35292"/>
<dbReference type="OMA" id="TRKNCHH"/>
<dbReference type="OrthoDB" id="9450033at2759"/>
<dbReference type="PhylomeDB" id="O35292"/>
<dbReference type="TreeFam" id="TF333393"/>
<dbReference type="Reactome" id="R-MMU-6798695">
    <property type="pathway name" value="Neutrophil degranulation"/>
</dbReference>
<dbReference type="BioGRID-ORCS" id="54159">
    <property type="hits" value="3 hits in 77 CRISPR screens"/>
</dbReference>
<dbReference type="PRO" id="PR:O35292"/>
<dbReference type="Proteomes" id="UP000000589">
    <property type="component" value="Chromosome 14"/>
</dbReference>
<dbReference type="RNAct" id="O35292">
    <property type="molecule type" value="protein"/>
</dbReference>
<dbReference type="Bgee" id="ENSMUSG00000059606">
    <property type="expression patterns" value="Expressed in lip and 23 other cell types or tissues"/>
</dbReference>
<dbReference type="ExpressionAtlas" id="O35292">
    <property type="expression patterns" value="baseline and differential"/>
</dbReference>
<dbReference type="GO" id="GO:0016829">
    <property type="term" value="F:lyase activity"/>
    <property type="evidence" value="ECO:0007669"/>
    <property type="project" value="UniProtKB-KW"/>
</dbReference>
<dbReference type="GO" id="GO:0003676">
    <property type="term" value="F:nucleic acid binding"/>
    <property type="evidence" value="ECO:0007669"/>
    <property type="project" value="InterPro"/>
</dbReference>
<dbReference type="GO" id="GO:0004522">
    <property type="term" value="F:ribonuclease A activity"/>
    <property type="evidence" value="ECO:0007669"/>
    <property type="project" value="UniProtKB-EC"/>
</dbReference>
<dbReference type="CDD" id="cd06265">
    <property type="entry name" value="RNase_A_canonical"/>
    <property type="match status" value="1"/>
</dbReference>
<dbReference type="FunFam" id="3.10.130.10:FF:000001">
    <property type="entry name" value="Ribonuclease pancreatic"/>
    <property type="match status" value="1"/>
</dbReference>
<dbReference type="Gene3D" id="3.10.130.10">
    <property type="entry name" value="Ribonuclease A-like domain"/>
    <property type="match status" value="1"/>
</dbReference>
<dbReference type="InterPro" id="IPR001427">
    <property type="entry name" value="RNaseA"/>
</dbReference>
<dbReference type="InterPro" id="IPR036816">
    <property type="entry name" value="RNaseA-like_dom_sf"/>
</dbReference>
<dbReference type="InterPro" id="IPR023411">
    <property type="entry name" value="RNaseA_AS"/>
</dbReference>
<dbReference type="InterPro" id="IPR023412">
    <property type="entry name" value="RNaseA_domain"/>
</dbReference>
<dbReference type="PANTHER" id="PTHR11437:SF3">
    <property type="entry name" value="EOSINOPHIL CATIONIC PROTEIN"/>
    <property type="match status" value="1"/>
</dbReference>
<dbReference type="PANTHER" id="PTHR11437">
    <property type="entry name" value="RIBONUCLEASE"/>
    <property type="match status" value="1"/>
</dbReference>
<dbReference type="Pfam" id="PF00074">
    <property type="entry name" value="RnaseA"/>
    <property type="match status" value="1"/>
</dbReference>
<dbReference type="PRINTS" id="PR00794">
    <property type="entry name" value="RIBONUCLEASE"/>
</dbReference>
<dbReference type="SMART" id="SM00092">
    <property type="entry name" value="RNAse_Pc"/>
    <property type="match status" value="1"/>
</dbReference>
<dbReference type="SUPFAM" id="SSF54076">
    <property type="entry name" value="RNase A-like"/>
    <property type="match status" value="1"/>
</dbReference>
<dbReference type="PROSITE" id="PS00127">
    <property type="entry name" value="RNASE_PANCREATIC"/>
    <property type="match status" value="1"/>
</dbReference>
<evidence type="ECO:0000250" key="1">
    <source>
        <dbReference type="UniProtKB" id="P10153"/>
    </source>
</evidence>
<evidence type="ECO:0000255" key="2"/>
<evidence type="ECO:0000305" key="3"/>
<evidence type="ECO:0000312" key="4">
    <source>
        <dbReference type="MGI" id="MGI:1858598"/>
    </source>
</evidence>
<organism>
    <name type="scientific">Mus musculus</name>
    <name type="common">Mouse</name>
    <dbReference type="NCBI Taxonomy" id="10090"/>
    <lineage>
        <taxon>Eukaryota</taxon>
        <taxon>Metazoa</taxon>
        <taxon>Chordata</taxon>
        <taxon>Craniata</taxon>
        <taxon>Vertebrata</taxon>
        <taxon>Euteleostomi</taxon>
        <taxon>Mammalia</taxon>
        <taxon>Eutheria</taxon>
        <taxon>Euarchontoglires</taxon>
        <taxon>Glires</taxon>
        <taxon>Rodentia</taxon>
        <taxon>Myomorpha</taxon>
        <taxon>Muroidea</taxon>
        <taxon>Muridae</taxon>
        <taxon>Murinae</taxon>
        <taxon>Mus</taxon>
        <taxon>Mus</taxon>
    </lineage>
</organism>
<keyword id="KW-1015">Disulfide bond</keyword>
<keyword id="KW-0255">Endonuclease</keyword>
<keyword id="KW-0325">Glycoprotein</keyword>
<keyword id="KW-0378">Hydrolase</keyword>
<keyword id="KW-0456">Lyase</keyword>
<keyword id="KW-0944">Nitration</keyword>
<keyword id="KW-0540">Nuclease</keyword>
<keyword id="KW-1185">Reference proteome</keyword>
<keyword id="KW-0732">Signal</keyword>
<gene>
    <name evidence="4" type="primary">Rnase2b</name>
    <name evidence="4" type="synonym">Ear5</name>
</gene>
<protein>
    <recommendedName>
        <fullName evidence="4">Ribonuclease 2B</fullName>
        <ecNumber evidence="1">4.6.1.18</ecNumber>
    </recommendedName>
    <alternativeName>
        <fullName evidence="3">Eosinophil cationic-type ribonuclease 5</fullName>
    </alternativeName>
    <alternativeName>
        <fullName evidence="3">MR-5</fullName>
    </alternativeName>
</protein>
<feature type="signal peptide" evidence="2">
    <location>
        <begin position="1"/>
        <end position="25"/>
    </location>
</feature>
<feature type="chain" id="PRO_0000030870" description="Ribonuclease 2B" evidence="3">
    <location>
        <begin position="26"/>
        <end position="155"/>
    </location>
</feature>
<feature type="active site" description="Proton acceptor" evidence="1">
    <location>
        <position position="38"/>
    </location>
</feature>
<feature type="active site" description="Proton donor" evidence="1">
    <location>
        <position position="150"/>
    </location>
</feature>
<feature type="binding site" evidence="1">
    <location>
        <begin position="62"/>
        <end position="66"/>
    </location>
    <ligand>
        <name>substrate</name>
    </ligand>
</feature>
<feature type="glycosylation site" description="N-linked (GlcNAc...) asparagine" evidence="2">
    <location>
        <position position="114"/>
    </location>
</feature>
<feature type="disulfide bond" evidence="1">
    <location>
        <begin position="47"/>
        <end position="106"/>
    </location>
</feature>
<feature type="disulfide bond" evidence="1">
    <location>
        <begin position="61"/>
        <end position="118"/>
    </location>
</feature>
<feature type="disulfide bond" evidence="1">
    <location>
        <begin position="79"/>
        <end position="133"/>
    </location>
</feature>
<feature type="disulfide bond" evidence="1">
    <location>
        <begin position="86"/>
        <end position="94"/>
    </location>
</feature>
<feature type="sequence conflict" description="In Ref. 1; AAC53491." evidence="3" ref="1">
    <original>D</original>
    <variation>A</variation>
    <location>
        <position position="35"/>
    </location>
</feature>
<feature type="sequence conflict" description="In Ref. 1; AAC53491." evidence="3" ref="1">
    <original>A</original>
    <variation>G</variation>
    <location>
        <position position="125"/>
    </location>
</feature>